<reference key="1">
    <citation type="journal article" date="2003" name="Nat. Genet.">
        <title>Comparative analysis of the genome sequences of Bordetella pertussis, Bordetella parapertussis and Bordetella bronchiseptica.</title>
        <authorList>
            <person name="Parkhill J."/>
            <person name="Sebaihia M."/>
            <person name="Preston A."/>
            <person name="Murphy L.D."/>
            <person name="Thomson N.R."/>
            <person name="Harris D.E."/>
            <person name="Holden M.T.G."/>
            <person name="Churcher C.M."/>
            <person name="Bentley S.D."/>
            <person name="Mungall K.L."/>
            <person name="Cerdeno-Tarraga A.-M."/>
            <person name="Temple L."/>
            <person name="James K.D."/>
            <person name="Harris B."/>
            <person name="Quail M.A."/>
            <person name="Achtman M."/>
            <person name="Atkin R."/>
            <person name="Baker S."/>
            <person name="Basham D."/>
            <person name="Bason N."/>
            <person name="Cherevach I."/>
            <person name="Chillingworth T."/>
            <person name="Collins M."/>
            <person name="Cronin A."/>
            <person name="Davis P."/>
            <person name="Doggett J."/>
            <person name="Feltwell T."/>
            <person name="Goble A."/>
            <person name="Hamlin N."/>
            <person name="Hauser H."/>
            <person name="Holroyd S."/>
            <person name="Jagels K."/>
            <person name="Leather S."/>
            <person name="Moule S."/>
            <person name="Norberczak H."/>
            <person name="O'Neil S."/>
            <person name="Ormond D."/>
            <person name="Price C."/>
            <person name="Rabbinowitsch E."/>
            <person name="Rutter S."/>
            <person name="Sanders M."/>
            <person name="Saunders D."/>
            <person name="Seeger K."/>
            <person name="Sharp S."/>
            <person name="Simmonds M."/>
            <person name="Skelton J."/>
            <person name="Squares R."/>
            <person name="Squares S."/>
            <person name="Stevens K."/>
            <person name="Unwin L."/>
            <person name="Whitehead S."/>
            <person name="Barrell B.G."/>
            <person name="Maskell D.J."/>
        </authorList>
    </citation>
    <scope>NUCLEOTIDE SEQUENCE [LARGE SCALE GENOMIC DNA]</scope>
    <source>
        <strain>12822 / ATCC BAA-587 / NCTC 13253</strain>
    </source>
</reference>
<proteinExistence type="inferred from homology"/>
<gene>
    <name evidence="1" type="primary">pyrG</name>
    <name type="ordered locus">BPP3255</name>
</gene>
<name>PYRG_BORPA</name>
<accession>Q7W5N6</accession>
<keyword id="KW-0067">ATP-binding</keyword>
<keyword id="KW-0315">Glutamine amidotransferase</keyword>
<keyword id="KW-0436">Ligase</keyword>
<keyword id="KW-0460">Magnesium</keyword>
<keyword id="KW-0479">Metal-binding</keyword>
<keyword id="KW-0547">Nucleotide-binding</keyword>
<keyword id="KW-0665">Pyrimidine biosynthesis</keyword>
<dbReference type="EC" id="6.3.4.2" evidence="1"/>
<dbReference type="EMBL" id="BX640433">
    <property type="protein sequence ID" value="CAE38540.1"/>
    <property type="molecule type" value="Genomic_DNA"/>
</dbReference>
<dbReference type="RefSeq" id="WP_003813705.1">
    <property type="nucleotide sequence ID" value="NC_002928.3"/>
</dbReference>
<dbReference type="SMR" id="Q7W5N6"/>
<dbReference type="KEGG" id="bpa:BPP3255"/>
<dbReference type="HOGENOM" id="CLU_011675_5_0_4"/>
<dbReference type="UniPathway" id="UPA00159">
    <property type="reaction ID" value="UER00277"/>
</dbReference>
<dbReference type="Proteomes" id="UP000001421">
    <property type="component" value="Chromosome"/>
</dbReference>
<dbReference type="GO" id="GO:0005829">
    <property type="term" value="C:cytosol"/>
    <property type="evidence" value="ECO:0007669"/>
    <property type="project" value="TreeGrafter"/>
</dbReference>
<dbReference type="GO" id="GO:0005524">
    <property type="term" value="F:ATP binding"/>
    <property type="evidence" value="ECO:0007669"/>
    <property type="project" value="UniProtKB-KW"/>
</dbReference>
<dbReference type="GO" id="GO:0003883">
    <property type="term" value="F:CTP synthase activity"/>
    <property type="evidence" value="ECO:0007669"/>
    <property type="project" value="UniProtKB-UniRule"/>
</dbReference>
<dbReference type="GO" id="GO:0004359">
    <property type="term" value="F:glutaminase activity"/>
    <property type="evidence" value="ECO:0007669"/>
    <property type="project" value="RHEA"/>
</dbReference>
<dbReference type="GO" id="GO:0042802">
    <property type="term" value="F:identical protein binding"/>
    <property type="evidence" value="ECO:0007669"/>
    <property type="project" value="TreeGrafter"/>
</dbReference>
<dbReference type="GO" id="GO:0046872">
    <property type="term" value="F:metal ion binding"/>
    <property type="evidence" value="ECO:0007669"/>
    <property type="project" value="UniProtKB-KW"/>
</dbReference>
<dbReference type="GO" id="GO:0044210">
    <property type="term" value="P:'de novo' CTP biosynthetic process"/>
    <property type="evidence" value="ECO:0007669"/>
    <property type="project" value="UniProtKB-UniRule"/>
</dbReference>
<dbReference type="GO" id="GO:0019856">
    <property type="term" value="P:pyrimidine nucleobase biosynthetic process"/>
    <property type="evidence" value="ECO:0007669"/>
    <property type="project" value="TreeGrafter"/>
</dbReference>
<dbReference type="CDD" id="cd03113">
    <property type="entry name" value="CTPS_N"/>
    <property type="match status" value="1"/>
</dbReference>
<dbReference type="CDD" id="cd01746">
    <property type="entry name" value="GATase1_CTP_Synthase"/>
    <property type="match status" value="1"/>
</dbReference>
<dbReference type="FunFam" id="3.40.50.300:FF:000009">
    <property type="entry name" value="CTP synthase"/>
    <property type="match status" value="1"/>
</dbReference>
<dbReference type="FunFam" id="3.40.50.880:FF:000002">
    <property type="entry name" value="CTP synthase"/>
    <property type="match status" value="1"/>
</dbReference>
<dbReference type="Gene3D" id="3.40.50.880">
    <property type="match status" value="1"/>
</dbReference>
<dbReference type="Gene3D" id="3.40.50.300">
    <property type="entry name" value="P-loop containing nucleotide triphosphate hydrolases"/>
    <property type="match status" value="1"/>
</dbReference>
<dbReference type="HAMAP" id="MF_01227">
    <property type="entry name" value="PyrG"/>
    <property type="match status" value="1"/>
</dbReference>
<dbReference type="InterPro" id="IPR029062">
    <property type="entry name" value="Class_I_gatase-like"/>
</dbReference>
<dbReference type="InterPro" id="IPR004468">
    <property type="entry name" value="CTP_synthase"/>
</dbReference>
<dbReference type="InterPro" id="IPR017456">
    <property type="entry name" value="CTP_synthase_N"/>
</dbReference>
<dbReference type="InterPro" id="IPR017926">
    <property type="entry name" value="GATASE"/>
</dbReference>
<dbReference type="InterPro" id="IPR033828">
    <property type="entry name" value="GATase1_CTP_Synthase"/>
</dbReference>
<dbReference type="InterPro" id="IPR027417">
    <property type="entry name" value="P-loop_NTPase"/>
</dbReference>
<dbReference type="NCBIfam" id="NF003792">
    <property type="entry name" value="PRK05380.1"/>
    <property type="match status" value="1"/>
</dbReference>
<dbReference type="NCBIfam" id="TIGR00337">
    <property type="entry name" value="PyrG"/>
    <property type="match status" value="1"/>
</dbReference>
<dbReference type="PANTHER" id="PTHR11550">
    <property type="entry name" value="CTP SYNTHASE"/>
    <property type="match status" value="1"/>
</dbReference>
<dbReference type="PANTHER" id="PTHR11550:SF0">
    <property type="entry name" value="CTP SYNTHASE-RELATED"/>
    <property type="match status" value="1"/>
</dbReference>
<dbReference type="Pfam" id="PF06418">
    <property type="entry name" value="CTP_synth_N"/>
    <property type="match status" value="1"/>
</dbReference>
<dbReference type="Pfam" id="PF00117">
    <property type="entry name" value="GATase"/>
    <property type="match status" value="1"/>
</dbReference>
<dbReference type="SUPFAM" id="SSF52317">
    <property type="entry name" value="Class I glutamine amidotransferase-like"/>
    <property type="match status" value="1"/>
</dbReference>
<dbReference type="SUPFAM" id="SSF52540">
    <property type="entry name" value="P-loop containing nucleoside triphosphate hydrolases"/>
    <property type="match status" value="1"/>
</dbReference>
<dbReference type="PROSITE" id="PS51273">
    <property type="entry name" value="GATASE_TYPE_1"/>
    <property type="match status" value="1"/>
</dbReference>
<sequence>MTKYVFVTGGVVSSLGKGIAAASLAAILESRGLQVTLLKLDPYINVDPGTMSPFQHGEVFVTEDGAETDLDLGHYERFISARMRKVNNFTTGQIYESVLRKERRGDYLGKTVQVIPHITNEIQDFVARGAEAAWNGATDVAIVEIGGTVGDIESLPFLEAARQMSLRMGRNNAAFVHLTLVPYIASAGELKTKPTQHSVQKLREIGIYPNVLLCRADRRIPDDERAKISMFSNVPLDAVISVWDVDSIYKIPAMLHKQGVDNIVCEALGLTPPPADLSMWDNLVDALEHPQDSVTIGMVGKYVDLTESYKSLSEALVHAGIHTRSKVNIEYIDSEDIETRGTDQLKHLDAILVPGGFGKRGTEGKIAAIRYARENGVPYLGICLGMQLAVIEFARHVAGLGGANSTEFDPAAPHPVVALITEWMDREGRVERRDNSSDLGGTMRKGAQRCPIRPGTRAQSIYGDDVNERHRHRYEVNNVYVPRLEDAGMVISARTPTENLPEMMELPSHPWFVGVQFHPEFTSTPRDGHPLFSSYIRAALEHKAQRAKEA</sequence>
<organism>
    <name type="scientific">Bordetella parapertussis (strain 12822 / ATCC BAA-587 / NCTC 13253)</name>
    <dbReference type="NCBI Taxonomy" id="257311"/>
    <lineage>
        <taxon>Bacteria</taxon>
        <taxon>Pseudomonadati</taxon>
        <taxon>Pseudomonadota</taxon>
        <taxon>Betaproteobacteria</taxon>
        <taxon>Burkholderiales</taxon>
        <taxon>Alcaligenaceae</taxon>
        <taxon>Bordetella</taxon>
    </lineage>
</organism>
<protein>
    <recommendedName>
        <fullName evidence="1">CTP synthase</fullName>
        <ecNumber evidence="1">6.3.4.2</ecNumber>
    </recommendedName>
    <alternativeName>
        <fullName evidence="1">Cytidine 5'-triphosphate synthase</fullName>
    </alternativeName>
    <alternativeName>
        <fullName evidence="1">Cytidine triphosphate synthetase</fullName>
        <shortName evidence="1">CTP synthetase</shortName>
        <shortName evidence="1">CTPS</shortName>
    </alternativeName>
    <alternativeName>
        <fullName evidence="1">UTP--ammonia ligase</fullName>
    </alternativeName>
</protein>
<feature type="chain" id="PRO_0000266074" description="CTP synthase">
    <location>
        <begin position="1"/>
        <end position="550"/>
    </location>
</feature>
<feature type="domain" description="Glutamine amidotransferase type-1" evidence="1">
    <location>
        <begin position="295"/>
        <end position="545"/>
    </location>
</feature>
<feature type="region of interest" description="Amidoligase domain" evidence="1">
    <location>
        <begin position="1"/>
        <end position="270"/>
    </location>
</feature>
<feature type="region of interest" description="Disordered" evidence="2">
    <location>
        <begin position="430"/>
        <end position="459"/>
    </location>
</feature>
<feature type="active site" description="Nucleophile; for glutamine hydrolysis" evidence="1">
    <location>
        <position position="383"/>
    </location>
</feature>
<feature type="active site" evidence="1">
    <location>
        <position position="518"/>
    </location>
</feature>
<feature type="active site" evidence="1">
    <location>
        <position position="520"/>
    </location>
</feature>
<feature type="binding site" evidence="1">
    <location>
        <position position="13"/>
    </location>
    <ligand>
        <name>CTP</name>
        <dbReference type="ChEBI" id="CHEBI:37563"/>
        <note>allosteric inhibitor</note>
    </ligand>
</feature>
<feature type="binding site" evidence="1">
    <location>
        <position position="13"/>
    </location>
    <ligand>
        <name>UTP</name>
        <dbReference type="ChEBI" id="CHEBI:46398"/>
    </ligand>
</feature>
<feature type="binding site" evidence="1">
    <location>
        <begin position="14"/>
        <end position="19"/>
    </location>
    <ligand>
        <name>ATP</name>
        <dbReference type="ChEBI" id="CHEBI:30616"/>
    </ligand>
</feature>
<feature type="binding site" evidence="1">
    <location>
        <position position="71"/>
    </location>
    <ligand>
        <name>ATP</name>
        <dbReference type="ChEBI" id="CHEBI:30616"/>
    </ligand>
</feature>
<feature type="binding site" evidence="1">
    <location>
        <position position="71"/>
    </location>
    <ligand>
        <name>Mg(2+)</name>
        <dbReference type="ChEBI" id="CHEBI:18420"/>
    </ligand>
</feature>
<feature type="binding site" evidence="1">
    <location>
        <position position="144"/>
    </location>
    <ligand>
        <name>Mg(2+)</name>
        <dbReference type="ChEBI" id="CHEBI:18420"/>
    </ligand>
</feature>
<feature type="binding site" evidence="1">
    <location>
        <begin position="151"/>
        <end position="153"/>
    </location>
    <ligand>
        <name>CTP</name>
        <dbReference type="ChEBI" id="CHEBI:37563"/>
        <note>allosteric inhibitor</note>
    </ligand>
</feature>
<feature type="binding site" evidence="1">
    <location>
        <begin position="191"/>
        <end position="196"/>
    </location>
    <ligand>
        <name>CTP</name>
        <dbReference type="ChEBI" id="CHEBI:37563"/>
        <note>allosteric inhibitor</note>
    </ligand>
</feature>
<feature type="binding site" evidence="1">
    <location>
        <begin position="191"/>
        <end position="196"/>
    </location>
    <ligand>
        <name>UTP</name>
        <dbReference type="ChEBI" id="CHEBI:46398"/>
    </ligand>
</feature>
<feature type="binding site" evidence="1">
    <location>
        <position position="227"/>
    </location>
    <ligand>
        <name>CTP</name>
        <dbReference type="ChEBI" id="CHEBI:37563"/>
        <note>allosteric inhibitor</note>
    </ligand>
</feature>
<feature type="binding site" evidence="1">
    <location>
        <position position="227"/>
    </location>
    <ligand>
        <name>UTP</name>
        <dbReference type="ChEBI" id="CHEBI:46398"/>
    </ligand>
</feature>
<feature type="binding site" evidence="1">
    <location>
        <position position="356"/>
    </location>
    <ligand>
        <name>L-glutamine</name>
        <dbReference type="ChEBI" id="CHEBI:58359"/>
    </ligand>
</feature>
<feature type="binding site" evidence="1">
    <location>
        <begin position="384"/>
        <end position="387"/>
    </location>
    <ligand>
        <name>L-glutamine</name>
        <dbReference type="ChEBI" id="CHEBI:58359"/>
    </ligand>
</feature>
<feature type="binding site" evidence="1">
    <location>
        <position position="407"/>
    </location>
    <ligand>
        <name>L-glutamine</name>
        <dbReference type="ChEBI" id="CHEBI:58359"/>
    </ligand>
</feature>
<feature type="binding site" evidence="1">
    <location>
        <position position="473"/>
    </location>
    <ligand>
        <name>L-glutamine</name>
        <dbReference type="ChEBI" id="CHEBI:58359"/>
    </ligand>
</feature>
<comment type="function">
    <text evidence="1">Catalyzes the ATP-dependent amination of UTP to CTP with either L-glutamine or ammonia as the source of nitrogen. Regulates intracellular CTP levels through interactions with the four ribonucleotide triphosphates.</text>
</comment>
<comment type="catalytic activity">
    <reaction evidence="1">
        <text>UTP + L-glutamine + ATP + H2O = CTP + L-glutamate + ADP + phosphate + 2 H(+)</text>
        <dbReference type="Rhea" id="RHEA:26426"/>
        <dbReference type="ChEBI" id="CHEBI:15377"/>
        <dbReference type="ChEBI" id="CHEBI:15378"/>
        <dbReference type="ChEBI" id="CHEBI:29985"/>
        <dbReference type="ChEBI" id="CHEBI:30616"/>
        <dbReference type="ChEBI" id="CHEBI:37563"/>
        <dbReference type="ChEBI" id="CHEBI:43474"/>
        <dbReference type="ChEBI" id="CHEBI:46398"/>
        <dbReference type="ChEBI" id="CHEBI:58359"/>
        <dbReference type="ChEBI" id="CHEBI:456216"/>
        <dbReference type="EC" id="6.3.4.2"/>
    </reaction>
</comment>
<comment type="catalytic activity">
    <reaction evidence="1">
        <text>L-glutamine + H2O = L-glutamate + NH4(+)</text>
        <dbReference type="Rhea" id="RHEA:15889"/>
        <dbReference type="ChEBI" id="CHEBI:15377"/>
        <dbReference type="ChEBI" id="CHEBI:28938"/>
        <dbReference type="ChEBI" id="CHEBI:29985"/>
        <dbReference type="ChEBI" id="CHEBI:58359"/>
    </reaction>
</comment>
<comment type="catalytic activity">
    <reaction evidence="1">
        <text>UTP + NH4(+) + ATP = CTP + ADP + phosphate + 2 H(+)</text>
        <dbReference type="Rhea" id="RHEA:16597"/>
        <dbReference type="ChEBI" id="CHEBI:15378"/>
        <dbReference type="ChEBI" id="CHEBI:28938"/>
        <dbReference type="ChEBI" id="CHEBI:30616"/>
        <dbReference type="ChEBI" id="CHEBI:37563"/>
        <dbReference type="ChEBI" id="CHEBI:43474"/>
        <dbReference type="ChEBI" id="CHEBI:46398"/>
        <dbReference type="ChEBI" id="CHEBI:456216"/>
    </reaction>
</comment>
<comment type="activity regulation">
    <text evidence="1">Allosterically activated by GTP, when glutamine is the substrate; GTP has no effect on the reaction when ammonia is the substrate. The allosteric effector GTP functions by stabilizing the protein conformation that binds the tetrahedral intermediate(s) formed during glutamine hydrolysis. Inhibited by the product CTP, via allosteric rather than competitive inhibition.</text>
</comment>
<comment type="pathway">
    <text evidence="1">Pyrimidine metabolism; CTP biosynthesis via de novo pathway; CTP from UDP: step 2/2.</text>
</comment>
<comment type="subunit">
    <text evidence="1">Homotetramer.</text>
</comment>
<comment type="miscellaneous">
    <text evidence="1">CTPSs have evolved a hybrid strategy for distinguishing between UTP and CTP. The overlapping regions of the product feedback inhibitory and substrate sites recognize a common feature in both compounds, the triphosphate moiety. To differentiate isosteric substrate and product pyrimidine rings, an additional pocket far from the expected kinase/ligase catalytic site, specifically recognizes the cytosine and ribose portions of the product inhibitor.</text>
</comment>
<comment type="similarity">
    <text evidence="1">Belongs to the CTP synthase family.</text>
</comment>
<evidence type="ECO:0000255" key="1">
    <source>
        <dbReference type="HAMAP-Rule" id="MF_01227"/>
    </source>
</evidence>
<evidence type="ECO:0000256" key="2">
    <source>
        <dbReference type="SAM" id="MobiDB-lite"/>
    </source>
</evidence>